<comment type="subcellular location">
    <subcellularLocation>
        <location>Plastid</location>
        <location>Chloroplast</location>
    </subcellularLocation>
</comment>
<comment type="similarity">
    <text evidence="1">Belongs to the bacterial ribosomal protein bL32 family.</text>
</comment>
<geneLocation type="chloroplast"/>
<protein>
    <recommendedName>
        <fullName evidence="1">Large ribosomal subunit protein bL32c</fullName>
    </recommendedName>
    <alternativeName>
        <fullName evidence="2">50S ribosomal protein L32, chloroplastic</fullName>
    </alternativeName>
</protein>
<reference key="1">
    <citation type="submission" date="2007-03" db="EMBL/GenBank/DDBJ databases">
        <title>Sequencing analysis of Barbarea verna chloroplast DNA.</title>
        <authorList>
            <person name="Hosouchi T."/>
            <person name="Tsuruoka H."/>
            <person name="Kotani H."/>
        </authorList>
    </citation>
    <scope>NUCLEOTIDE SEQUENCE [LARGE SCALE GENOMIC DNA]</scope>
</reference>
<proteinExistence type="inferred from homology"/>
<feature type="chain" id="PRO_0000296608" description="Large ribosomal subunit protein bL32c">
    <location>
        <begin position="1"/>
        <end position="52"/>
    </location>
</feature>
<name>RK32_BARVE</name>
<sequence length="52" mass="6061">MAVPKKRTSISKKRIRKKIWKRKGYWTSLKAFSLGKSLSTGNSKSFFVQQNK</sequence>
<accession>A4QKF5</accession>
<keyword id="KW-0150">Chloroplast</keyword>
<keyword id="KW-0934">Plastid</keyword>
<keyword id="KW-0687">Ribonucleoprotein</keyword>
<keyword id="KW-0689">Ribosomal protein</keyword>
<organism>
    <name type="scientific">Barbarea verna</name>
    <name type="common">Land cress</name>
    <name type="synonym">Erysimum vernum</name>
    <dbReference type="NCBI Taxonomy" id="50458"/>
    <lineage>
        <taxon>Eukaryota</taxon>
        <taxon>Viridiplantae</taxon>
        <taxon>Streptophyta</taxon>
        <taxon>Embryophyta</taxon>
        <taxon>Tracheophyta</taxon>
        <taxon>Spermatophyta</taxon>
        <taxon>Magnoliopsida</taxon>
        <taxon>eudicotyledons</taxon>
        <taxon>Gunneridae</taxon>
        <taxon>Pentapetalae</taxon>
        <taxon>rosids</taxon>
        <taxon>malvids</taxon>
        <taxon>Brassicales</taxon>
        <taxon>Brassicaceae</taxon>
        <taxon>Cardamineae</taxon>
        <taxon>Barbarea</taxon>
    </lineage>
</organism>
<dbReference type="EMBL" id="AP009370">
    <property type="protein sequence ID" value="BAF50160.1"/>
    <property type="molecule type" value="Genomic_DNA"/>
</dbReference>
<dbReference type="RefSeq" id="YP_001123335.1">
    <property type="nucleotide sequence ID" value="NC_009269.1"/>
</dbReference>
<dbReference type="SMR" id="A4QKF5"/>
<dbReference type="GeneID" id="4961927"/>
<dbReference type="GO" id="GO:0009507">
    <property type="term" value="C:chloroplast"/>
    <property type="evidence" value="ECO:0007669"/>
    <property type="project" value="UniProtKB-SubCell"/>
</dbReference>
<dbReference type="GO" id="GO:0015934">
    <property type="term" value="C:large ribosomal subunit"/>
    <property type="evidence" value="ECO:0007669"/>
    <property type="project" value="InterPro"/>
</dbReference>
<dbReference type="GO" id="GO:0003735">
    <property type="term" value="F:structural constituent of ribosome"/>
    <property type="evidence" value="ECO:0007669"/>
    <property type="project" value="InterPro"/>
</dbReference>
<dbReference type="GO" id="GO:0006412">
    <property type="term" value="P:translation"/>
    <property type="evidence" value="ECO:0007669"/>
    <property type="project" value="UniProtKB-UniRule"/>
</dbReference>
<dbReference type="HAMAP" id="MF_00340">
    <property type="entry name" value="Ribosomal_bL32"/>
    <property type="match status" value="1"/>
</dbReference>
<dbReference type="InterPro" id="IPR002677">
    <property type="entry name" value="Ribosomal_bL32"/>
</dbReference>
<dbReference type="InterPro" id="IPR044958">
    <property type="entry name" value="Ribosomal_bL32_plant/cyanobact"/>
</dbReference>
<dbReference type="InterPro" id="IPR011332">
    <property type="entry name" value="Ribosomal_zn-bd"/>
</dbReference>
<dbReference type="PANTHER" id="PTHR36083">
    <property type="entry name" value="50S RIBOSOMAL PROTEIN L32, CHLOROPLASTIC"/>
    <property type="match status" value="1"/>
</dbReference>
<dbReference type="PANTHER" id="PTHR36083:SF1">
    <property type="entry name" value="LARGE RIBOSOMAL SUBUNIT PROTEIN BL32C"/>
    <property type="match status" value="1"/>
</dbReference>
<dbReference type="Pfam" id="PF01783">
    <property type="entry name" value="Ribosomal_L32p"/>
    <property type="match status" value="1"/>
</dbReference>
<dbReference type="SUPFAM" id="SSF57829">
    <property type="entry name" value="Zn-binding ribosomal proteins"/>
    <property type="match status" value="1"/>
</dbReference>
<evidence type="ECO:0000255" key="1">
    <source>
        <dbReference type="HAMAP-Rule" id="MF_00340"/>
    </source>
</evidence>
<evidence type="ECO:0000305" key="2"/>
<gene>
    <name evidence="1" type="primary">rpl32</name>
</gene>